<reference key="1">
    <citation type="journal article" date="2000" name="Nucleic Acids Res.">
        <title>Complete genome sequence of the alkaliphilic bacterium Bacillus halodurans and genomic sequence comparison with Bacillus subtilis.</title>
        <authorList>
            <person name="Takami H."/>
            <person name="Nakasone K."/>
            <person name="Takaki Y."/>
            <person name="Maeno G."/>
            <person name="Sasaki R."/>
            <person name="Masui N."/>
            <person name="Fuji F."/>
            <person name="Hirama C."/>
            <person name="Nakamura Y."/>
            <person name="Ogasawara N."/>
            <person name="Kuhara S."/>
            <person name="Horikoshi K."/>
        </authorList>
    </citation>
    <scope>NUCLEOTIDE SEQUENCE [LARGE SCALE GENOMIC DNA]</scope>
    <source>
        <strain>ATCC BAA-125 / DSM 18197 / FERM 7344 / JCM 9153 / C-125</strain>
    </source>
</reference>
<gene>
    <name evidence="1" type="primary">uxaB</name>
    <name type="ordered locus">BH0492</name>
</gene>
<proteinExistence type="inferred from homology"/>
<name>UXAB_HALH5</name>
<feature type="chain" id="PRO_0000170738" description="Altronate oxidoreductase">
    <location>
        <begin position="1"/>
        <end position="512"/>
    </location>
</feature>
<feature type="binding site" evidence="1">
    <location>
        <begin position="26"/>
        <end position="37"/>
    </location>
    <ligand>
        <name>NAD(+)</name>
        <dbReference type="ChEBI" id="CHEBI:57540"/>
    </ligand>
</feature>
<protein>
    <recommendedName>
        <fullName evidence="1">Altronate oxidoreductase</fullName>
        <ecNumber evidence="1">1.1.1.58</ecNumber>
    </recommendedName>
    <alternativeName>
        <fullName evidence="1">Tagaturonate dehydrogenase</fullName>
    </alternativeName>
    <alternativeName>
        <fullName evidence="1">Tagaturonate reductase</fullName>
    </alternativeName>
</protein>
<comment type="catalytic activity">
    <reaction evidence="1">
        <text>D-altronate + NAD(+) = keto-D-tagaturonate + NADH + H(+)</text>
        <dbReference type="Rhea" id="RHEA:17813"/>
        <dbReference type="ChEBI" id="CHEBI:15378"/>
        <dbReference type="ChEBI" id="CHEBI:17360"/>
        <dbReference type="ChEBI" id="CHEBI:17886"/>
        <dbReference type="ChEBI" id="CHEBI:57540"/>
        <dbReference type="ChEBI" id="CHEBI:57945"/>
        <dbReference type="EC" id="1.1.1.58"/>
    </reaction>
</comment>
<comment type="pathway">
    <text evidence="1">Carbohydrate metabolism; pentose and glucuronate interconversion.</text>
</comment>
<comment type="similarity">
    <text evidence="1">Belongs to the mannitol dehydrogenase family. UxaB subfamily.</text>
</comment>
<accession>Q9KFI7</accession>
<evidence type="ECO:0000255" key="1">
    <source>
        <dbReference type="HAMAP-Rule" id="MF_00670"/>
    </source>
</evidence>
<keyword id="KW-0520">NAD</keyword>
<keyword id="KW-0560">Oxidoreductase</keyword>
<keyword id="KW-1185">Reference proteome</keyword>
<organism>
    <name type="scientific">Halalkalibacterium halodurans (strain ATCC BAA-125 / DSM 18197 / FERM 7344 / JCM 9153 / C-125)</name>
    <name type="common">Bacillus halodurans</name>
    <dbReference type="NCBI Taxonomy" id="272558"/>
    <lineage>
        <taxon>Bacteria</taxon>
        <taxon>Bacillati</taxon>
        <taxon>Bacillota</taxon>
        <taxon>Bacilli</taxon>
        <taxon>Bacillales</taxon>
        <taxon>Bacillaceae</taxon>
        <taxon>Halalkalibacterium (ex Joshi et al. 2022)</taxon>
    </lineage>
</organism>
<dbReference type="EC" id="1.1.1.58" evidence="1"/>
<dbReference type="EMBL" id="BA000004">
    <property type="protein sequence ID" value="BAB04211.1"/>
    <property type="molecule type" value="Genomic_DNA"/>
</dbReference>
<dbReference type="PIR" id="D83711">
    <property type="entry name" value="D83711"/>
</dbReference>
<dbReference type="RefSeq" id="WP_010896670.1">
    <property type="nucleotide sequence ID" value="NC_002570.2"/>
</dbReference>
<dbReference type="SMR" id="Q9KFI7"/>
<dbReference type="STRING" id="272558.gene:10726345"/>
<dbReference type="DNASU" id="892054"/>
<dbReference type="KEGG" id="bha:BH0492"/>
<dbReference type="eggNOG" id="COG0246">
    <property type="taxonomic scope" value="Bacteria"/>
</dbReference>
<dbReference type="HOGENOM" id="CLU_027324_1_0_9"/>
<dbReference type="OrthoDB" id="9768714at2"/>
<dbReference type="UniPathway" id="UPA00246"/>
<dbReference type="Proteomes" id="UP000001258">
    <property type="component" value="Chromosome"/>
</dbReference>
<dbReference type="GO" id="GO:0005829">
    <property type="term" value="C:cytosol"/>
    <property type="evidence" value="ECO:0007669"/>
    <property type="project" value="TreeGrafter"/>
</dbReference>
<dbReference type="GO" id="GO:0008926">
    <property type="term" value="F:mannitol-1-phosphate 5-dehydrogenase activity"/>
    <property type="evidence" value="ECO:0007669"/>
    <property type="project" value="TreeGrafter"/>
</dbReference>
<dbReference type="GO" id="GO:0009026">
    <property type="term" value="F:tagaturonate reductase activity"/>
    <property type="evidence" value="ECO:0007669"/>
    <property type="project" value="UniProtKB-UniRule"/>
</dbReference>
<dbReference type="GO" id="GO:0019698">
    <property type="term" value="P:D-galacturonate catabolic process"/>
    <property type="evidence" value="ECO:0007669"/>
    <property type="project" value="TreeGrafter"/>
</dbReference>
<dbReference type="GO" id="GO:0019592">
    <property type="term" value="P:mannitol catabolic process"/>
    <property type="evidence" value="ECO:0007669"/>
    <property type="project" value="TreeGrafter"/>
</dbReference>
<dbReference type="Gene3D" id="1.10.1040.10">
    <property type="entry name" value="N-(1-d-carboxylethyl)-l-norvaline Dehydrogenase, domain 2"/>
    <property type="match status" value="1"/>
</dbReference>
<dbReference type="Gene3D" id="3.40.50.720">
    <property type="entry name" value="NAD(P)-binding Rossmann-like Domain"/>
    <property type="match status" value="1"/>
</dbReference>
<dbReference type="HAMAP" id="MF_00670">
    <property type="entry name" value="Altron_oxidoreduct"/>
    <property type="match status" value="1"/>
</dbReference>
<dbReference type="InterPro" id="IPR008927">
    <property type="entry name" value="6-PGluconate_DH-like_C_sf"/>
</dbReference>
<dbReference type="InterPro" id="IPR013328">
    <property type="entry name" value="6PGD_dom2"/>
</dbReference>
<dbReference type="InterPro" id="IPR023668">
    <property type="entry name" value="Altronate_OxRdtase"/>
</dbReference>
<dbReference type="InterPro" id="IPR013118">
    <property type="entry name" value="Mannitol_DH_C"/>
</dbReference>
<dbReference type="InterPro" id="IPR013131">
    <property type="entry name" value="Mannitol_DH_N"/>
</dbReference>
<dbReference type="InterPro" id="IPR036291">
    <property type="entry name" value="NAD(P)-bd_dom_sf"/>
</dbReference>
<dbReference type="NCBIfam" id="NF002969">
    <property type="entry name" value="PRK03643.1"/>
    <property type="match status" value="1"/>
</dbReference>
<dbReference type="PANTHER" id="PTHR30524:SF0">
    <property type="entry name" value="ALTRONATE OXIDOREDUCTASE-RELATED"/>
    <property type="match status" value="1"/>
</dbReference>
<dbReference type="PANTHER" id="PTHR30524">
    <property type="entry name" value="MANNITOL-1-PHOSPHATE 5-DEHYDROGENASE"/>
    <property type="match status" value="1"/>
</dbReference>
<dbReference type="Pfam" id="PF01232">
    <property type="entry name" value="Mannitol_dh"/>
    <property type="match status" value="1"/>
</dbReference>
<dbReference type="Pfam" id="PF08125">
    <property type="entry name" value="Mannitol_dh_C"/>
    <property type="match status" value="1"/>
</dbReference>
<dbReference type="SUPFAM" id="SSF48179">
    <property type="entry name" value="6-phosphogluconate dehydrogenase C-terminal domain-like"/>
    <property type="match status" value="1"/>
</dbReference>
<dbReference type="SUPFAM" id="SSF51735">
    <property type="entry name" value="NAD(P)-binding Rossmann-fold domains"/>
    <property type="match status" value="1"/>
</dbReference>
<sequence>MEKLSHGLVTSRNMIRYKSSQLPERVLQFGEGNFLRGFIDWMIQQMNKQNVFNGRVVAIQPTPHGKVVPKLQEQDSLYTVWLRGIADGETVDHHEVITSISRGLNPYTNWQDVLEVAASPDISVVFSNTTEAGLTYLEEGYDKEKAPLSFPGKLAACLWHRYETLGWGEGSGLVIIPCELVEQNGKVLKELVCRYAKAWNFPQEFFTWLERENEFCHTLVDRIVPGFPSDTADECFERLGYEDILLTVAEPYHLFIIEGSERVRKLLPFNEAGLHVRWNHLEKHRNMKVRVLNGTHTFMFALSYLSGVDTVGEAMADEQLCSFIRKGLFEEIIPCVDAPEQEVTAFAETVLERFENPFLQHRLTDIGLNAVNKFRTRLMPTFNDYVAQTGEAPTYLLFSLAALINYYRGVEEDGPFLIGRRREDSYLIRDDLEVIEAFKVGWQQVNTGKLSLAQLCEDLLSKRELWGVDLSMERKVVDKVAESLQIIVEKGMRQAISGVLNQIGGNNHVHKQ</sequence>